<dbReference type="EMBL" id="CP001403">
    <property type="protein sequence ID" value="ACP44472.1"/>
    <property type="molecule type" value="Genomic_DNA"/>
</dbReference>
<dbReference type="SMR" id="C3N8N2"/>
<dbReference type="KEGG" id="siy:YG5714_0179"/>
<dbReference type="HOGENOM" id="CLU_026663_3_1_2"/>
<dbReference type="Proteomes" id="UP000002308">
    <property type="component" value="Chromosome"/>
</dbReference>
<dbReference type="GO" id="GO:0003743">
    <property type="term" value="F:translation initiation factor activity"/>
    <property type="evidence" value="ECO:0007669"/>
    <property type="project" value="UniProtKB-UniRule"/>
</dbReference>
<dbReference type="FunFam" id="3.30.30.170:FF:000001">
    <property type="entry name" value="Eukaryotic translation initiation factor 2 subunit"/>
    <property type="match status" value="1"/>
</dbReference>
<dbReference type="Gene3D" id="3.30.30.170">
    <property type="match status" value="1"/>
</dbReference>
<dbReference type="HAMAP" id="MF_00232">
    <property type="entry name" value="eIF_2_beta"/>
    <property type="match status" value="1"/>
</dbReference>
<dbReference type="InterPro" id="IPR045196">
    <property type="entry name" value="IF2/IF5"/>
</dbReference>
<dbReference type="InterPro" id="IPR004458">
    <property type="entry name" value="TIF2_bsu_arc"/>
</dbReference>
<dbReference type="InterPro" id="IPR002735">
    <property type="entry name" value="Transl_init_fac_IF2/IF5_dom"/>
</dbReference>
<dbReference type="InterPro" id="IPR016189">
    <property type="entry name" value="Transl_init_fac_IF2/IF5_N"/>
</dbReference>
<dbReference type="InterPro" id="IPR016190">
    <property type="entry name" value="Transl_init_fac_IF2/IF5_Zn-bd"/>
</dbReference>
<dbReference type="NCBIfam" id="NF003067">
    <property type="entry name" value="PRK03988.1"/>
    <property type="match status" value="1"/>
</dbReference>
<dbReference type="PANTHER" id="PTHR23001">
    <property type="entry name" value="EUKARYOTIC TRANSLATION INITIATION FACTOR"/>
    <property type="match status" value="1"/>
</dbReference>
<dbReference type="PANTHER" id="PTHR23001:SF3">
    <property type="entry name" value="EUKARYOTIC TRANSLATION INITIATION FACTOR 2 SUBUNIT 2"/>
    <property type="match status" value="1"/>
</dbReference>
<dbReference type="Pfam" id="PF01873">
    <property type="entry name" value="eIF-5_eIF-2B"/>
    <property type="match status" value="1"/>
</dbReference>
<dbReference type="SMART" id="SM00653">
    <property type="entry name" value="eIF2B_5"/>
    <property type="match status" value="1"/>
</dbReference>
<dbReference type="SUPFAM" id="SSF100966">
    <property type="entry name" value="Translation initiation factor 2 beta, aIF2beta, N-terminal domain"/>
    <property type="match status" value="1"/>
</dbReference>
<dbReference type="SUPFAM" id="SSF75689">
    <property type="entry name" value="Zinc-binding domain of translation initiation factor 2 beta"/>
    <property type="match status" value="1"/>
</dbReference>
<sequence>MSSEKEYVEMLDRLYSKLPEKGRKEGTQALPNLIIFNIGNTTMIRNFAEYCDRIRREDKICMKYLLKELAAPGNVDDKGELIIQGKFSSQVINTLMERFLKAYVECSTCKSLDTVLKKEKKSWYIVCLACGAQTPVKPL</sequence>
<comment type="function">
    <text evidence="1">eIF-2 functions in the early steps of protein synthesis by forming a ternary complex with GTP and initiator tRNA.</text>
</comment>
<comment type="subunit">
    <text evidence="1">Heterotrimer composed of an alpha, a beta and a gamma chain.</text>
</comment>
<comment type="similarity">
    <text evidence="1">Belongs to the eIF-2-beta/eIF-5 family.</text>
</comment>
<protein>
    <recommendedName>
        <fullName evidence="1">Translation initiation factor 2 subunit beta</fullName>
    </recommendedName>
    <alternativeName>
        <fullName evidence="1">aIF2-beta</fullName>
    </alternativeName>
    <alternativeName>
        <fullName evidence="1">eIF-2-beta</fullName>
    </alternativeName>
</protein>
<name>IF2B_SACI7</name>
<organism>
    <name type="scientific">Saccharolobus islandicus (strain Y.G.57.14 / Yellowstone #1)</name>
    <name type="common">Sulfolobus islandicus</name>
    <dbReference type="NCBI Taxonomy" id="439386"/>
    <lineage>
        <taxon>Archaea</taxon>
        <taxon>Thermoproteota</taxon>
        <taxon>Thermoprotei</taxon>
        <taxon>Sulfolobales</taxon>
        <taxon>Sulfolobaceae</taxon>
        <taxon>Saccharolobus</taxon>
    </lineage>
</organism>
<proteinExistence type="inferred from homology"/>
<feature type="chain" id="PRO_1000204382" description="Translation initiation factor 2 subunit beta">
    <location>
        <begin position="1"/>
        <end position="139"/>
    </location>
</feature>
<keyword id="KW-0396">Initiation factor</keyword>
<keyword id="KW-0648">Protein biosynthesis</keyword>
<evidence type="ECO:0000255" key="1">
    <source>
        <dbReference type="HAMAP-Rule" id="MF_00232"/>
    </source>
</evidence>
<accession>C3N8N2</accession>
<gene>
    <name evidence="1" type="primary">eif2b</name>
    <name type="ordered locus">YG5714_0179</name>
</gene>
<reference key="1">
    <citation type="journal article" date="2009" name="Proc. Natl. Acad. Sci. U.S.A.">
        <title>Biogeography of the Sulfolobus islandicus pan-genome.</title>
        <authorList>
            <person name="Reno M.L."/>
            <person name="Held N.L."/>
            <person name="Fields C.J."/>
            <person name="Burke P.V."/>
            <person name="Whitaker R.J."/>
        </authorList>
    </citation>
    <scope>NUCLEOTIDE SEQUENCE [LARGE SCALE GENOMIC DNA]</scope>
    <source>
        <strain>Y.G.57.14 / Yellowstone #1</strain>
    </source>
</reference>